<gene>
    <name evidence="1" type="primary">dys</name>
    <name type="ordered locus">TGAM_1020</name>
</gene>
<protein>
    <recommendedName>
        <fullName evidence="1">Probable deoxyhypusine synthase</fullName>
        <shortName evidence="1">DHS</shortName>
        <ecNumber evidence="1">2.5.1.46</ecNumber>
    </recommendedName>
</protein>
<reference key="1">
    <citation type="journal article" date="2007" name="Genome Biol.">
        <title>Genome analysis and genome-wide proteomics of Thermococcus gammatolerans, the most radioresistant organism known amongst the Archaea.</title>
        <authorList>
            <person name="Zivanovic Y."/>
            <person name="Armengaud J."/>
            <person name="Lagorce A."/>
            <person name="Leplat C."/>
            <person name="Guerin P."/>
            <person name="Dutertre M."/>
            <person name="Anthouard V."/>
            <person name="Forterre P."/>
            <person name="Wincker P."/>
            <person name="Confalonieri F."/>
        </authorList>
    </citation>
    <scope>NUCLEOTIDE SEQUENCE [LARGE SCALE GENOMIC DNA]</scope>
    <source>
        <strain>DSM 15229 / JCM 11827 / EJ3</strain>
    </source>
</reference>
<dbReference type="EC" id="2.5.1.46" evidence="1"/>
<dbReference type="EMBL" id="CP001398">
    <property type="protein sequence ID" value="ACS33522.1"/>
    <property type="molecule type" value="Genomic_DNA"/>
</dbReference>
<dbReference type="RefSeq" id="WP_015858636.1">
    <property type="nucleotide sequence ID" value="NC_012804.1"/>
</dbReference>
<dbReference type="SMR" id="C5A5L0"/>
<dbReference type="STRING" id="593117.TGAM_1020"/>
<dbReference type="PaxDb" id="593117-TGAM_1020"/>
<dbReference type="GeneID" id="7988077"/>
<dbReference type="KEGG" id="tga:TGAM_1020"/>
<dbReference type="PATRIC" id="fig|593117.10.peg.1016"/>
<dbReference type="eggNOG" id="arCOG04142">
    <property type="taxonomic scope" value="Archaea"/>
</dbReference>
<dbReference type="HOGENOM" id="CLU_039781_0_0_2"/>
<dbReference type="OrthoDB" id="17730at2157"/>
<dbReference type="UniPathway" id="UPA00354"/>
<dbReference type="Proteomes" id="UP000001488">
    <property type="component" value="Chromosome"/>
</dbReference>
<dbReference type="GO" id="GO:0005737">
    <property type="term" value="C:cytoplasm"/>
    <property type="evidence" value="ECO:0007669"/>
    <property type="project" value="TreeGrafter"/>
</dbReference>
<dbReference type="GO" id="GO:0034038">
    <property type="term" value="F:deoxyhypusine synthase activity"/>
    <property type="evidence" value="ECO:0007669"/>
    <property type="project" value="UniProtKB-UniRule"/>
</dbReference>
<dbReference type="FunFam" id="3.40.910.10:FF:000004">
    <property type="entry name" value="Probable deoxyhypusine synthase"/>
    <property type="match status" value="1"/>
</dbReference>
<dbReference type="Gene3D" id="3.40.910.10">
    <property type="entry name" value="Deoxyhypusine synthase"/>
    <property type="match status" value="1"/>
</dbReference>
<dbReference type="HAMAP" id="MF_00153">
    <property type="entry name" value="DHS"/>
    <property type="match status" value="1"/>
</dbReference>
<dbReference type="InterPro" id="IPR022899">
    <property type="entry name" value="Deoxyhypus_synthase_arc"/>
</dbReference>
<dbReference type="InterPro" id="IPR002773">
    <property type="entry name" value="Deoxyhypusine_synthase"/>
</dbReference>
<dbReference type="InterPro" id="IPR036982">
    <property type="entry name" value="Deoxyhypusine_synthase_sf"/>
</dbReference>
<dbReference type="InterPro" id="IPR029035">
    <property type="entry name" value="DHS-like_NAD/FAD-binding_dom"/>
</dbReference>
<dbReference type="NCBIfam" id="TIGR00321">
    <property type="entry name" value="dhys"/>
    <property type="match status" value="1"/>
</dbReference>
<dbReference type="NCBIfam" id="NF003052">
    <property type="entry name" value="PRK03971.1"/>
    <property type="match status" value="1"/>
</dbReference>
<dbReference type="PANTHER" id="PTHR11703">
    <property type="entry name" value="DEOXYHYPUSINE SYNTHASE"/>
    <property type="match status" value="1"/>
</dbReference>
<dbReference type="PANTHER" id="PTHR11703:SF0">
    <property type="entry name" value="DEOXYHYPUSINE SYNTHASE"/>
    <property type="match status" value="1"/>
</dbReference>
<dbReference type="Pfam" id="PF01916">
    <property type="entry name" value="DS"/>
    <property type="match status" value="1"/>
</dbReference>
<dbReference type="SUPFAM" id="SSF52467">
    <property type="entry name" value="DHS-like NAD/FAD-binding domain"/>
    <property type="match status" value="1"/>
</dbReference>
<evidence type="ECO:0000255" key="1">
    <source>
        <dbReference type="HAMAP-Rule" id="MF_00153"/>
    </source>
</evidence>
<proteinExistence type="inferred from homology"/>
<sequence length="336" mass="38115">MTEPKDIVLKESEEVEGTPIEGPWLDEVSSLEEVLDYYERIGFQATHLGKAIEIWKKVEEKRARGEEVRVFLGYTSNIISSGLREIIAWLVKEGKVDVIVTTAGGIEEDFIKALKPFILGDWNVNDALMREKGINRIGNIFVPNDRYIEFEKYMIPFFERVLEIEKERGKPLTASEFIYEMGRFMDEKLGKEKEKSVIYWAYKRNVPIFCPAITDGSIGDMLYFFKEERGDRELIIDIANDIVKLNNLAVTAKETASIILGGSLPKHAIINANLFRGGTDYAIYVTTAIPWDGSLSGAPPSEGVSWGKIRAKADYVEIWADATLVFPLLVWKVMRS</sequence>
<keyword id="KW-0386">Hypusine biosynthesis</keyword>
<keyword id="KW-0520">NAD</keyword>
<keyword id="KW-1185">Reference proteome</keyword>
<keyword id="KW-0808">Transferase</keyword>
<accession>C5A5L0</accession>
<organism>
    <name type="scientific">Thermococcus gammatolerans (strain DSM 15229 / JCM 11827 / EJ3)</name>
    <dbReference type="NCBI Taxonomy" id="593117"/>
    <lineage>
        <taxon>Archaea</taxon>
        <taxon>Methanobacteriati</taxon>
        <taxon>Methanobacteriota</taxon>
        <taxon>Thermococci</taxon>
        <taxon>Thermococcales</taxon>
        <taxon>Thermococcaceae</taxon>
        <taxon>Thermococcus</taxon>
    </lineage>
</organism>
<name>DHYS_THEGJ</name>
<feature type="chain" id="PRO_1000203450" description="Probable deoxyhypusine synthase">
    <location>
        <begin position="1"/>
        <end position="336"/>
    </location>
</feature>
<feature type="active site" description="Nucleophile" evidence="1">
    <location>
        <position position="308"/>
    </location>
</feature>
<comment type="function">
    <text evidence="1">Catalyzes the NAD-dependent oxidative cleavage of spermidine and the subsequent transfer of the butylamine moiety of spermidine to the epsilon-amino group of a specific lysine residue of the eIF-5A precursor protein to form the intermediate deoxyhypusine residue.</text>
</comment>
<comment type="catalytic activity">
    <reaction evidence="1">
        <text>[eIF5A protein]-L-lysine + spermidine = [eIF5A protein]-deoxyhypusine + propane-1,3-diamine</text>
        <dbReference type="Rhea" id="RHEA:33299"/>
        <dbReference type="Rhea" id="RHEA-COMP:10143"/>
        <dbReference type="Rhea" id="RHEA-COMP:10144"/>
        <dbReference type="ChEBI" id="CHEBI:29969"/>
        <dbReference type="ChEBI" id="CHEBI:57484"/>
        <dbReference type="ChEBI" id="CHEBI:57834"/>
        <dbReference type="ChEBI" id="CHEBI:82657"/>
        <dbReference type="EC" id="2.5.1.46"/>
    </reaction>
</comment>
<comment type="cofactor">
    <cofactor evidence="1">
        <name>NAD(+)</name>
        <dbReference type="ChEBI" id="CHEBI:57540"/>
    </cofactor>
</comment>
<comment type="pathway">
    <text evidence="1">Protein modification; eIF5A hypusination.</text>
</comment>
<comment type="similarity">
    <text evidence="1">Belongs to the deoxyhypusine synthase family.</text>
</comment>